<organism>
    <name type="scientific">Geotalea daltonii (strain DSM 22248 / JCM 15807 / FRC-32)</name>
    <name type="common">Geobacter daltonii</name>
    <dbReference type="NCBI Taxonomy" id="316067"/>
    <lineage>
        <taxon>Bacteria</taxon>
        <taxon>Pseudomonadati</taxon>
        <taxon>Thermodesulfobacteriota</taxon>
        <taxon>Desulfuromonadia</taxon>
        <taxon>Geobacterales</taxon>
        <taxon>Geobacteraceae</taxon>
        <taxon>Geotalea</taxon>
    </lineage>
</organism>
<keyword id="KW-0963">Cytoplasm</keyword>
<keyword id="KW-0460">Magnesium</keyword>
<keyword id="KW-0479">Metal-binding</keyword>
<keyword id="KW-0548">Nucleotidyltransferase</keyword>
<keyword id="KW-1185">Reference proteome</keyword>
<keyword id="KW-0694">RNA-binding</keyword>
<keyword id="KW-0808">Transferase</keyword>
<proteinExistence type="inferred from homology"/>
<reference key="1">
    <citation type="submission" date="2009-01" db="EMBL/GenBank/DDBJ databases">
        <title>Complete sequence of Geobacter sp. FRC-32.</title>
        <authorList>
            <consortium name="US DOE Joint Genome Institute"/>
            <person name="Lucas S."/>
            <person name="Copeland A."/>
            <person name="Lapidus A."/>
            <person name="Glavina del Rio T."/>
            <person name="Dalin E."/>
            <person name="Tice H."/>
            <person name="Bruce D."/>
            <person name="Goodwin L."/>
            <person name="Pitluck S."/>
            <person name="Saunders E."/>
            <person name="Brettin T."/>
            <person name="Detter J.C."/>
            <person name="Han C."/>
            <person name="Larimer F."/>
            <person name="Land M."/>
            <person name="Hauser L."/>
            <person name="Kyrpides N."/>
            <person name="Ovchinnikova G."/>
            <person name="Kostka J."/>
            <person name="Richardson P."/>
        </authorList>
    </citation>
    <scope>NUCLEOTIDE SEQUENCE [LARGE SCALE GENOMIC DNA]</scope>
    <source>
        <strain>DSM 22248 / JCM 15807 / FRC-32</strain>
    </source>
</reference>
<dbReference type="EC" id="2.7.7.8" evidence="1"/>
<dbReference type="EMBL" id="CP001390">
    <property type="protein sequence ID" value="ACM21047.1"/>
    <property type="molecule type" value="Genomic_DNA"/>
</dbReference>
<dbReference type="RefSeq" id="WP_012647775.1">
    <property type="nucleotide sequence ID" value="NC_011979.1"/>
</dbReference>
<dbReference type="SMR" id="B9M1G5"/>
<dbReference type="STRING" id="316067.Geob_2697"/>
<dbReference type="KEGG" id="geo:Geob_2697"/>
<dbReference type="eggNOG" id="COG1185">
    <property type="taxonomic scope" value="Bacteria"/>
</dbReference>
<dbReference type="HOGENOM" id="CLU_004217_2_2_7"/>
<dbReference type="OrthoDB" id="9804305at2"/>
<dbReference type="Proteomes" id="UP000007721">
    <property type="component" value="Chromosome"/>
</dbReference>
<dbReference type="GO" id="GO:0005829">
    <property type="term" value="C:cytosol"/>
    <property type="evidence" value="ECO:0007669"/>
    <property type="project" value="TreeGrafter"/>
</dbReference>
<dbReference type="GO" id="GO:0000175">
    <property type="term" value="F:3'-5'-RNA exonuclease activity"/>
    <property type="evidence" value="ECO:0007669"/>
    <property type="project" value="TreeGrafter"/>
</dbReference>
<dbReference type="GO" id="GO:0000287">
    <property type="term" value="F:magnesium ion binding"/>
    <property type="evidence" value="ECO:0007669"/>
    <property type="project" value="UniProtKB-UniRule"/>
</dbReference>
<dbReference type="GO" id="GO:0004654">
    <property type="term" value="F:polyribonucleotide nucleotidyltransferase activity"/>
    <property type="evidence" value="ECO:0007669"/>
    <property type="project" value="UniProtKB-UniRule"/>
</dbReference>
<dbReference type="GO" id="GO:0003723">
    <property type="term" value="F:RNA binding"/>
    <property type="evidence" value="ECO:0007669"/>
    <property type="project" value="UniProtKB-UniRule"/>
</dbReference>
<dbReference type="GO" id="GO:0006402">
    <property type="term" value="P:mRNA catabolic process"/>
    <property type="evidence" value="ECO:0007669"/>
    <property type="project" value="UniProtKB-UniRule"/>
</dbReference>
<dbReference type="GO" id="GO:0006396">
    <property type="term" value="P:RNA processing"/>
    <property type="evidence" value="ECO:0007669"/>
    <property type="project" value="InterPro"/>
</dbReference>
<dbReference type="CDD" id="cd02393">
    <property type="entry name" value="KH-I_PNPase"/>
    <property type="match status" value="1"/>
</dbReference>
<dbReference type="CDD" id="cd11363">
    <property type="entry name" value="RNase_PH_PNPase_1"/>
    <property type="match status" value="1"/>
</dbReference>
<dbReference type="CDD" id="cd11364">
    <property type="entry name" value="RNase_PH_PNPase_2"/>
    <property type="match status" value="1"/>
</dbReference>
<dbReference type="CDD" id="cd04472">
    <property type="entry name" value="S1_PNPase"/>
    <property type="match status" value="1"/>
</dbReference>
<dbReference type="FunFam" id="2.40.50.140:FF:000023">
    <property type="entry name" value="Polyribonucleotide nucleotidyltransferase"/>
    <property type="match status" value="1"/>
</dbReference>
<dbReference type="FunFam" id="3.30.1370.10:FF:000001">
    <property type="entry name" value="Polyribonucleotide nucleotidyltransferase"/>
    <property type="match status" value="1"/>
</dbReference>
<dbReference type="FunFam" id="3.30.230.70:FF:000001">
    <property type="entry name" value="Polyribonucleotide nucleotidyltransferase"/>
    <property type="match status" value="1"/>
</dbReference>
<dbReference type="FunFam" id="3.30.230.70:FF:000002">
    <property type="entry name" value="Polyribonucleotide nucleotidyltransferase"/>
    <property type="match status" value="1"/>
</dbReference>
<dbReference type="Gene3D" id="3.30.230.70">
    <property type="entry name" value="GHMP Kinase, N-terminal domain"/>
    <property type="match status" value="2"/>
</dbReference>
<dbReference type="Gene3D" id="3.30.1370.10">
    <property type="entry name" value="K Homology domain, type 1"/>
    <property type="match status" value="1"/>
</dbReference>
<dbReference type="Gene3D" id="2.40.50.140">
    <property type="entry name" value="Nucleic acid-binding proteins"/>
    <property type="match status" value="1"/>
</dbReference>
<dbReference type="HAMAP" id="MF_01595">
    <property type="entry name" value="PNPase"/>
    <property type="match status" value="1"/>
</dbReference>
<dbReference type="InterPro" id="IPR001247">
    <property type="entry name" value="ExoRNase_PH_dom1"/>
</dbReference>
<dbReference type="InterPro" id="IPR015847">
    <property type="entry name" value="ExoRNase_PH_dom2"/>
</dbReference>
<dbReference type="InterPro" id="IPR036345">
    <property type="entry name" value="ExoRNase_PH_dom2_sf"/>
</dbReference>
<dbReference type="InterPro" id="IPR004087">
    <property type="entry name" value="KH_dom"/>
</dbReference>
<dbReference type="InterPro" id="IPR004088">
    <property type="entry name" value="KH_dom_type_1"/>
</dbReference>
<dbReference type="InterPro" id="IPR036612">
    <property type="entry name" value="KH_dom_type_1_sf"/>
</dbReference>
<dbReference type="InterPro" id="IPR012340">
    <property type="entry name" value="NA-bd_OB-fold"/>
</dbReference>
<dbReference type="InterPro" id="IPR012162">
    <property type="entry name" value="PNPase"/>
</dbReference>
<dbReference type="InterPro" id="IPR027408">
    <property type="entry name" value="PNPase/RNase_PH_dom_sf"/>
</dbReference>
<dbReference type="InterPro" id="IPR015848">
    <property type="entry name" value="PNPase_PH_RNA-bd_bac/org-type"/>
</dbReference>
<dbReference type="InterPro" id="IPR036456">
    <property type="entry name" value="PNPase_PH_RNA-bd_sf"/>
</dbReference>
<dbReference type="InterPro" id="IPR020568">
    <property type="entry name" value="Ribosomal_Su5_D2-typ_SF"/>
</dbReference>
<dbReference type="InterPro" id="IPR003029">
    <property type="entry name" value="S1_domain"/>
</dbReference>
<dbReference type="NCBIfam" id="TIGR03591">
    <property type="entry name" value="polynuc_phos"/>
    <property type="match status" value="1"/>
</dbReference>
<dbReference type="NCBIfam" id="NF008805">
    <property type="entry name" value="PRK11824.1"/>
    <property type="match status" value="1"/>
</dbReference>
<dbReference type="PANTHER" id="PTHR11252">
    <property type="entry name" value="POLYRIBONUCLEOTIDE NUCLEOTIDYLTRANSFERASE"/>
    <property type="match status" value="1"/>
</dbReference>
<dbReference type="PANTHER" id="PTHR11252:SF0">
    <property type="entry name" value="POLYRIBONUCLEOTIDE NUCLEOTIDYLTRANSFERASE 1, MITOCHONDRIAL"/>
    <property type="match status" value="1"/>
</dbReference>
<dbReference type="Pfam" id="PF00013">
    <property type="entry name" value="KH_1"/>
    <property type="match status" value="1"/>
</dbReference>
<dbReference type="Pfam" id="PF03726">
    <property type="entry name" value="PNPase"/>
    <property type="match status" value="1"/>
</dbReference>
<dbReference type="Pfam" id="PF01138">
    <property type="entry name" value="RNase_PH"/>
    <property type="match status" value="2"/>
</dbReference>
<dbReference type="Pfam" id="PF03725">
    <property type="entry name" value="RNase_PH_C"/>
    <property type="match status" value="2"/>
</dbReference>
<dbReference type="Pfam" id="PF00575">
    <property type="entry name" value="S1"/>
    <property type="match status" value="1"/>
</dbReference>
<dbReference type="PIRSF" id="PIRSF005499">
    <property type="entry name" value="PNPase"/>
    <property type="match status" value="1"/>
</dbReference>
<dbReference type="SMART" id="SM00322">
    <property type="entry name" value="KH"/>
    <property type="match status" value="1"/>
</dbReference>
<dbReference type="SMART" id="SM00316">
    <property type="entry name" value="S1"/>
    <property type="match status" value="1"/>
</dbReference>
<dbReference type="SUPFAM" id="SSF54791">
    <property type="entry name" value="Eukaryotic type KH-domain (KH-domain type I)"/>
    <property type="match status" value="1"/>
</dbReference>
<dbReference type="SUPFAM" id="SSF50249">
    <property type="entry name" value="Nucleic acid-binding proteins"/>
    <property type="match status" value="1"/>
</dbReference>
<dbReference type="SUPFAM" id="SSF46915">
    <property type="entry name" value="Polynucleotide phosphorylase/guanosine pentaphosphate synthase (PNPase/GPSI), domain 3"/>
    <property type="match status" value="1"/>
</dbReference>
<dbReference type="SUPFAM" id="SSF55666">
    <property type="entry name" value="Ribonuclease PH domain 2-like"/>
    <property type="match status" value="2"/>
</dbReference>
<dbReference type="SUPFAM" id="SSF54211">
    <property type="entry name" value="Ribosomal protein S5 domain 2-like"/>
    <property type="match status" value="2"/>
</dbReference>
<dbReference type="PROSITE" id="PS50084">
    <property type="entry name" value="KH_TYPE_1"/>
    <property type="match status" value="1"/>
</dbReference>
<dbReference type="PROSITE" id="PS50126">
    <property type="entry name" value="S1"/>
    <property type="match status" value="1"/>
</dbReference>
<sequence>METKVQVECGGRTITIETGKMAKQASGAVVVSSGDTRVLVTAVATKTAKEGQDFFPLTVNYQEKAYAGGKIPGGFFKREARPSDNETLTCRLIDRPIRPLFPDNFLNDTQIMATVISADKDNDPGILSMVGASAALMVSDIPFQGPIAGVKVGRIDGRFVANPGFEEMEKSDIEIVVAASKDAIIMVEGSAAEVSEEDMLEAIFFGHAAIQGLLAAQVELAEKAGVAKREVLPPVVNEALKAKVKELAYSRMKEAVRIKSKVERHNTIDTITGEVLTALAEEFEGAAKEIKGFLGDFEYDLVREHIIKDGERIDGRDTKTIRQITTEVGLLPRAHGSALFTRGETQALVVATLGTSIDEQRIDSLFGESKKRFLLHYNFPPFSVGETSFRLAPGRREIGHGMLAERALARVVPKHESFPYTIRIVSDILESNGSSSMASVCGGSMSMMDAGIPIKAPVAGIAMGLIKEGDDFAILSDILGDEDHLGDMDFKVAGTSTGVTALQMDIKIGGVTREIMGVALKQAHEGRLHILSKMAETIGTSKAELSTFAPRITTIYVKTDKIRDVIGSGGKNIRGITEATGVTIDIDDTGKINIASTDKAACDMAIKMIRDLTAEAEEGKLYMGLVKKVMEFGAFVEIFPGTDGLVHISELDTERVKNVTDVLKEGDKVLVKCIGIDKQGKIKLSRKEALGASLPE</sequence>
<gene>
    <name evidence="1" type="primary">pnp</name>
    <name type="ordered locus">Geob_2697</name>
</gene>
<name>PNP_GEODF</name>
<protein>
    <recommendedName>
        <fullName evidence="1">Polyribonucleotide nucleotidyltransferase</fullName>
        <ecNumber evidence="1">2.7.7.8</ecNumber>
    </recommendedName>
    <alternativeName>
        <fullName evidence="1">Polynucleotide phosphorylase</fullName>
        <shortName evidence="1">PNPase</shortName>
    </alternativeName>
</protein>
<accession>B9M1G5</accession>
<evidence type="ECO:0000255" key="1">
    <source>
        <dbReference type="HAMAP-Rule" id="MF_01595"/>
    </source>
</evidence>
<comment type="function">
    <text evidence="1">Involved in mRNA degradation. Catalyzes the phosphorolysis of single-stranded polyribonucleotides processively in the 3'- to 5'-direction.</text>
</comment>
<comment type="catalytic activity">
    <reaction evidence="1">
        <text>RNA(n+1) + phosphate = RNA(n) + a ribonucleoside 5'-diphosphate</text>
        <dbReference type="Rhea" id="RHEA:22096"/>
        <dbReference type="Rhea" id="RHEA-COMP:14527"/>
        <dbReference type="Rhea" id="RHEA-COMP:17342"/>
        <dbReference type="ChEBI" id="CHEBI:43474"/>
        <dbReference type="ChEBI" id="CHEBI:57930"/>
        <dbReference type="ChEBI" id="CHEBI:140395"/>
        <dbReference type="EC" id="2.7.7.8"/>
    </reaction>
</comment>
<comment type="cofactor">
    <cofactor evidence="1">
        <name>Mg(2+)</name>
        <dbReference type="ChEBI" id="CHEBI:18420"/>
    </cofactor>
</comment>
<comment type="subcellular location">
    <subcellularLocation>
        <location evidence="1">Cytoplasm</location>
    </subcellularLocation>
</comment>
<comment type="similarity">
    <text evidence="1">Belongs to the polyribonucleotide nucleotidyltransferase family.</text>
</comment>
<feature type="chain" id="PRO_0000381900" description="Polyribonucleotide nucleotidyltransferase">
    <location>
        <begin position="1"/>
        <end position="696"/>
    </location>
</feature>
<feature type="domain" description="KH" evidence="1">
    <location>
        <begin position="550"/>
        <end position="609"/>
    </location>
</feature>
<feature type="domain" description="S1 motif" evidence="1">
    <location>
        <begin position="619"/>
        <end position="687"/>
    </location>
</feature>
<feature type="binding site" evidence="1">
    <location>
        <position position="483"/>
    </location>
    <ligand>
        <name>Mg(2+)</name>
        <dbReference type="ChEBI" id="CHEBI:18420"/>
    </ligand>
</feature>
<feature type="binding site" evidence="1">
    <location>
        <position position="489"/>
    </location>
    <ligand>
        <name>Mg(2+)</name>
        <dbReference type="ChEBI" id="CHEBI:18420"/>
    </ligand>
</feature>